<gene>
    <name evidence="1" type="primary">cimA</name>
    <name type="ordered locus">MTH_723</name>
</gene>
<feature type="chain" id="PRO_0000140453" description="Putative (R)-citramalate synthase CimA">
    <location>
        <begin position="1"/>
        <end position="496"/>
    </location>
</feature>
<feature type="domain" description="Pyruvate carboxyltransferase" evidence="2">
    <location>
        <begin position="3"/>
        <end position="253"/>
    </location>
</feature>
<sequence length="496" mass="53705">MQVRVLDTTLRDGEQTPGVSLTPEEKLRIALKIDALGADIIEAGSAITSEGEREGIRKITSEGLRAEICSFARAVREDIDAAISCDVDSVHLVVPTSDLHLEHKLRKTREEVLEQAVDCTEYAVDHGILVELSAEDSTRSDMDFLRTIFREGIEAGAERICACDTVGILTPERSYEFYRGLSELGAPLSVHCHNDFGLAVANSLAGLRAGASEVHATINGIGERAGNAALEEVVVALKSLYDVDTSINIEMLYETSRMVARMTGVYLQPNKAIVGENAFAHESGIHADGVLKKAETYEPITPEMVGHGRGFVMGKHIGTHALRKRLDELGMKVADDKLMEIFRRVKTLGDMGKCVTDVDLQAIAEDVLGVMEDKVVDLQEVTIVSGNRVTPTASVKLRVDDREVLEAGTGVGPVDAAIVAIKKSLEDFADITLEEYHVDAITGGTDALIDVVIKLRHGDRIISARSTQPDIIMASVEAFLSGVNRLLANEKSEGTH</sequence>
<name>CIMA_METTH</name>
<proteinExistence type="inferred from homology"/>
<reference key="1">
    <citation type="journal article" date="1997" name="J. Bacteriol.">
        <title>Complete genome sequence of Methanobacterium thermoautotrophicum deltaH: functional analysis and comparative genomics.</title>
        <authorList>
            <person name="Smith D.R."/>
            <person name="Doucette-Stamm L.A."/>
            <person name="Deloughery C."/>
            <person name="Lee H.-M."/>
            <person name="Dubois J."/>
            <person name="Aldredge T."/>
            <person name="Bashirzadeh R."/>
            <person name="Blakely D."/>
            <person name="Cook R."/>
            <person name="Gilbert K."/>
            <person name="Harrison D."/>
            <person name="Hoang L."/>
            <person name="Keagle P."/>
            <person name="Lumm W."/>
            <person name="Pothier B."/>
            <person name="Qiu D."/>
            <person name="Spadafora R."/>
            <person name="Vicare R."/>
            <person name="Wang Y."/>
            <person name="Wierzbowski J."/>
            <person name="Gibson R."/>
            <person name="Jiwani N."/>
            <person name="Caruso A."/>
            <person name="Bush D."/>
            <person name="Safer H."/>
            <person name="Patwell D."/>
            <person name="Prabhakar S."/>
            <person name="McDougall S."/>
            <person name="Shimer G."/>
            <person name="Goyal A."/>
            <person name="Pietrovski S."/>
            <person name="Church G.M."/>
            <person name="Daniels C.J."/>
            <person name="Mao J.-I."/>
            <person name="Rice P."/>
            <person name="Noelling J."/>
            <person name="Reeve J.N."/>
        </authorList>
    </citation>
    <scope>NUCLEOTIDE SEQUENCE [LARGE SCALE GENOMIC DNA]</scope>
    <source>
        <strain>ATCC 29096 / DSM 1053 / JCM 10044 / NBRC 100330 / Delta H</strain>
    </source>
</reference>
<keyword id="KW-0028">Amino-acid biosynthesis</keyword>
<keyword id="KW-0100">Branched-chain amino acid biosynthesis</keyword>
<keyword id="KW-0412">Isoleucine biosynthesis</keyword>
<keyword id="KW-1185">Reference proteome</keyword>
<keyword id="KW-0808">Transferase</keyword>
<comment type="function">
    <text evidence="1">Catalyzes the condensation of pyruvate and acetyl-coenzyme A to form (R)-citramalate.</text>
</comment>
<comment type="catalytic activity">
    <reaction evidence="1">
        <text>pyruvate + acetyl-CoA + H2O = (3R)-citramalate + CoA + H(+)</text>
        <dbReference type="Rhea" id="RHEA:19045"/>
        <dbReference type="ChEBI" id="CHEBI:15361"/>
        <dbReference type="ChEBI" id="CHEBI:15377"/>
        <dbReference type="ChEBI" id="CHEBI:15378"/>
        <dbReference type="ChEBI" id="CHEBI:30934"/>
        <dbReference type="ChEBI" id="CHEBI:57287"/>
        <dbReference type="ChEBI" id="CHEBI:57288"/>
        <dbReference type="EC" id="2.3.3.21"/>
    </reaction>
</comment>
<comment type="pathway">
    <text evidence="1">Amino-acid biosynthesis; L-isoleucine biosynthesis; 2-oxobutanoate from pyruvate: step 1/3.</text>
</comment>
<comment type="subunit">
    <text evidence="1">Homodimer.</text>
</comment>
<comment type="similarity">
    <text evidence="1">Belongs to the alpha-IPM synthase/homocitrate synthase family.</text>
</comment>
<organism>
    <name type="scientific">Methanothermobacter thermautotrophicus (strain ATCC 29096 / DSM 1053 / JCM 10044 / NBRC 100330 / Delta H)</name>
    <name type="common">Methanobacterium thermoautotrophicum</name>
    <dbReference type="NCBI Taxonomy" id="187420"/>
    <lineage>
        <taxon>Archaea</taxon>
        <taxon>Methanobacteriati</taxon>
        <taxon>Methanobacteriota</taxon>
        <taxon>Methanomada group</taxon>
        <taxon>Methanobacteria</taxon>
        <taxon>Methanobacteriales</taxon>
        <taxon>Methanobacteriaceae</taxon>
        <taxon>Methanothermobacter</taxon>
    </lineage>
</organism>
<protein>
    <recommendedName>
        <fullName evidence="1">Putative (R)-citramalate synthase CimA</fullName>
        <ecNumber evidence="1">2.3.3.21</ecNumber>
    </recommendedName>
</protein>
<evidence type="ECO:0000255" key="1">
    <source>
        <dbReference type="HAMAP-Rule" id="MF_01028"/>
    </source>
</evidence>
<evidence type="ECO:0000255" key="2">
    <source>
        <dbReference type="PROSITE-ProRule" id="PRU01151"/>
    </source>
</evidence>
<dbReference type="EC" id="2.3.3.21" evidence="1"/>
<dbReference type="EMBL" id="AE000666">
    <property type="protein sequence ID" value="AAB85228.1"/>
    <property type="molecule type" value="Genomic_DNA"/>
</dbReference>
<dbReference type="PIR" id="F69196">
    <property type="entry name" value="F69196"/>
</dbReference>
<dbReference type="RefSeq" id="WP_010876362.1">
    <property type="nucleotide sequence ID" value="NC_000916.1"/>
</dbReference>
<dbReference type="SMR" id="O26819"/>
<dbReference type="FunCoup" id="O26819">
    <property type="interactions" value="201"/>
</dbReference>
<dbReference type="STRING" id="187420.MTH_723"/>
<dbReference type="PaxDb" id="187420-MTH_723"/>
<dbReference type="EnsemblBacteria" id="AAB85228">
    <property type="protein sequence ID" value="AAB85228"/>
    <property type="gene ID" value="MTH_723"/>
</dbReference>
<dbReference type="GeneID" id="1470684"/>
<dbReference type="KEGG" id="mth:MTH_723"/>
<dbReference type="PATRIC" id="fig|187420.15.peg.708"/>
<dbReference type="HOGENOM" id="CLU_022158_0_1_2"/>
<dbReference type="InParanoid" id="O26819"/>
<dbReference type="UniPathway" id="UPA00047">
    <property type="reaction ID" value="UER00066"/>
</dbReference>
<dbReference type="Proteomes" id="UP000005223">
    <property type="component" value="Chromosome"/>
</dbReference>
<dbReference type="GO" id="GO:0043714">
    <property type="term" value="F:(R)-citramalate synthase activity"/>
    <property type="evidence" value="ECO:0007669"/>
    <property type="project" value="InterPro"/>
</dbReference>
<dbReference type="GO" id="GO:0003852">
    <property type="term" value="F:2-isopropylmalate synthase activity"/>
    <property type="evidence" value="ECO:0007669"/>
    <property type="project" value="InterPro"/>
</dbReference>
<dbReference type="GO" id="GO:0009097">
    <property type="term" value="P:isoleucine biosynthetic process"/>
    <property type="evidence" value="ECO:0007669"/>
    <property type="project" value="UniProtKB-UniRule"/>
</dbReference>
<dbReference type="GO" id="GO:0009098">
    <property type="term" value="P:L-leucine biosynthetic process"/>
    <property type="evidence" value="ECO:0007669"/>
    <property type="project" value="InterPro"/>
</dbReference>
<dbReference type="CDD" id="cd07940">
    <property type="entry name" value="DRE_TIM_IPMS"/>
    <property type="match status" value="1"/>
</dbReference>
<dbReference type="FunFam" id="1.10.238.260:FF:000001">
    <property type="entry name" value="2-isopropylmalate synthase"/>
    <property type="match status" value="1"/>
</dbReference>
<dbReference type="FunFam" id="3.20.20.70:FF:000010">
    <property type="entry name" value="2-isopropylmalate synthase"/>
    <property type="match status" value="1"/>
</dbReference>
<dbReference type="Gene3D" id="1.10.238.260">
    <property type="match status" value="1"/>
</dbReference>
<dbReference type="Gene3D" id="3.30.160.270">
    <property type="match status" value="1"/>
</dbReference>
<dbReference type="Gene3D" id="3.20.20.70">
    <property type="entry name" value="Aldolase class I"/>
    <property type="match status" value="1"/>
</dbReference>
<dbReference type="HAMAP" id="MF_01028">
    <property type="entry name" value="CimA"/>
    <property type="match status" value="1"/>
</dbReference>
<dbReference type="InterPro" id="IPR013709">
    <property type="entry name" value="2-isopropylmalate_synth_dimer"/>
</dbReference>
<dbReference type="InterPro" id="IPR002034">
    <property type="entry name" value="AIPM/Hcit_synth_CS"/>
</dbReference>
<dbReference type="InterPro" id="IPR013785">
    <property type="entry name" value="Aldolase_TIM"/>
</dbReference>
<dbReference type="InterPro" id="IPR024890">
    <property type="entry name" value="Citramalate_synthase_CimA"/>
</dbReference>
<dbReference type="InterPro" id="IPR011830">
    <property type="entry name" value="LEU1_arch"/>
</dbReference>
<dbReference type="InterPro" id="IPR054691">
    <property type="entry name" value="LeuA/HCS_post-cat"/>
</dbReference>
<dbReference type="InterPro" id="IPR036230">
    <property type="entry name" value="LeuA_allosteric_dom_sf"/>
</dbReference>
<dbReference type="InterPro" id="IPR000891">
    <property type="entry name" value="PYR_CT"/>
</dbReference>
<dbReference type="NCBIfam" id="TIGR02090">
    <property type="entry name" value="LEU1_arch"/>
    <property type="match status" value="1"/>
</dbReference>
<dbReference type="NCBIfam" id="NF002085">
    <property type="entry name" value="PRK00915.1-2"/>
    <property type="match status" value="1"/>
</dbReference>
<dbReference type="NCBIfam" id="NF002086">
    <property type="entry name" value="PRK00915.1-3"/>
    <property type="match status" value="1"/>
</dbReference>
<dbReference type="PANTHER" id="PTHR42880:SF2">
    <property type="entry name" value="(R)-CITRAMALATE SYNTHASE CIMA"/>
    <property type="match status" value="1"/>
</dbReference>
<dbReference type="PANTHER" id="PTHR42880">
    <property type="entry name" value="HOMOCITRATE SYNTHASE"/>
    <property type="match status" value="1"/>
</dbReference>
<dbReference type="Pfam" id="PF22617">
    <property type="entry name" value="HCS_D2"/>
    <property type="match status" value="1"/>
</dbReference>
<dbReference type="Pfam" id="PF00682">
    <property type="entry name" value="HMGL-like"/>
    <property type="match status" value="1"/>
</dbReference>
<dbReference type="Pfam" id="PF08502">
    <property type="entry name" value="LeuA_dimer"/>
    <property type="match status" value="1"/>
</dbReference>
<dbReference type="SMART" id="SM00917">
    <property type="entry name" value="LeuA_dimer"/>
    <property type="match status" value="1"/>
</dbReference>
<dbReference type="SUPFAM" id="SSF110921">
    <property type="entry name" value="2-isopropylmalate synthase LeuA, allosteric (dimerisation) domain"/>
    <property type="match status" value="1"/>
</dbReference>
<dbReference type="SUPFAM" id="SSF51569">
    <property type="entry name" value="Aldolase"/>
    <property type="match status" value="1"/>
</dbReference>
<dbReference type="PROSITE" id="PS00815">
    <property type="entry name" value="AIPM_HOMOCIT_SYNTH_1"/>
    <property type="match status" value="1"/>
</dbReference>
<dbReference type="PROSITE" id="PS00816">
    <property type="entry name" value="AIPM_HOMOCIT_SYNTH_2"/>
    <property type="match status" value="1"/>
</dbReference>
<dbReference type="PROSITE" id="PS50991">
    <property type="entry name" value="PYR_CT"/>
    <property type="match status" value="1"/>
</dbReference>
<accession>O26819</accession>